<organism>
    <name type="scientific">Bacillus cereus (strain ATCC 10987 / NRS 248)</name>
    <dbReference type="NCBI Taxonomy" id="222523"/>
    <lineage>
        <taxon>Bacteria</taxon>
        <taxon>Bacillati</taxon>
        <taxon>Bacillota</taxon>
        <taxon>Bacilli</taxon>
        <taxon>Bacillales</taxon>
        <taxon>Bacillaceae</taxon>
        <taxon>Bacillus</taxon>
        <taxon>Bacillus cereus group</taxon>
    </lineage>
</organism>
<protein>
    <recommendedName>
        <fullName evidence="1">UPF0398 protein BCE_1688</fullName>
    </recommendedName>
</protein>
<accession>Q73AT4</accession>
<evidence type="ECO:0000255" key="1">
    <source>
        <dbReference type="HAMAP-Rule" id="MF_01575"/>
    </source>
</evidence>
<dbReference type="EMBL" id="AE017194">
    <property type="protein sequence ID" value="AAS40617.1"/>
    <property type="molecule type" value="Genomic_DNA"/>
</dbReference>
<dbReference type="SMR" id="Q73AT4"/>
<dbReference type="KEGG" id="bca:BCE_1688"/>
<dbReference type="HOGENOM" id="CLU_105319_0_0_9"/>
<dbReference type="Proteomes" id="UP000002527">
    <property type="component" value="Chromosome"/>
</dbReference>
<dbReference type="Gene3D" id="3.40.50.450">
    <property type="match status" value="1"/>
</dbReference>
<dbReference type="HAMAP" id="MF_01575">
    <property type="entry name" value="UPF0398"/>
    <property type="match status" value="1"/>
</dbReference>
<dbReference type="InterPro" id="IPR010697">
    <property type="entry name" value="YspA"/>
</dbReference>
<dbReference type="NCBIfam" id="NF010181">
    <property type="entry name" value="PRK13660.1"/>
    <property type="match status" value="1"/>
</dbReference>
<dbReference type="PANTHER" id="PTHR38440:SF1">
    <property type="entry name" value="UPF0398 PROTEIN SPR0331"/>
    <property type="match status" value="1"/>
</dbReference>
<dbReference type="PANTHER" id="PTHR38440">
    <property type="entry name" value="UPF0398 PROTEIN YPSA"/>
    <property type="match status" value="1"/>
</dbReference>
<dbReference type="Pfam" id="PF06908">
    <property type="entry name" value="YpsA"/>
    <property type="match status" value="1"/>
</dbReference>
<dbReference type="PIRSF" id="PIRSF021290">
    <property type="entry name" value="DUF1273"/>
    <property type="match status" value="1"/>
</dbReference>
<dbReference type="SUPFAM" id="SSF102405">
    <property type="entry name" value="MCP/YpsA-like"/>
    <property type="match status" value="1"/>
</dbReference>
<reference key="1">
    <citation type="journal article" date="2004" name="Nucleic Acids Res.">
        <title>The genome sequence of Bacillus cereus ATCC 10987 reveals metabolic adaptations and a large plasmid related to Bacillus anthracis pXO1.</title>
        <authorList>
            <person name="Rasko D.A."/>
            <person name="Ravel J."/>
            <person name="Oekstad O.A."/>
            <person name="Helgason E."/>
            <person name="Cer R.Z."/>
            <person name="Jiang L."/>
            <person name="Shores K.A."/>
            <person name="Fouts D.E."/>
            <person name="Tourasse N.J."/>
            <person name="Angiuoli S.V."/>
            <person name="Kolonay J.F."/>
            <person name="Nelson W.C."/>
            <person name="Kolstoe A.-B."/>
            <person name="Fraser C.M."/>
            <person name="Read T.D."/>
        </authorList>
    </citation>
    <scope>NUCLEOTIDE SEQUENCE [LARGE SCALE GENOMIC DNA]</scope>
    <source>
        <strain>ATCC 10987 / NRS 248</strain>
    </source>
</reference>
<comment type="similarity">
    <text evidence="1">Belongs to the UPF0398 family.</text>
</comment>
<sequence>MKVIAVTGYKPFELGIFKNDHPGVECIKKALRRKLTAFVEDGLEWVIISGQLGVELWAAEVVFEIQVEYPDLKLAVFTPFLEQEEGWKEDNREYYEFILSQADHVDSITKRKYESPEQFKLKNQFFIEKSDALLAVYDEEKPGSPKYIVEAAKKKGEIENYHSYFILFSDLQDIIEEEQWNNAE</sequence>
<name>Y1688_BACC1</name>
<gene>
    <name type="ordered locus">BCE_1688</name>
</gene>
<proteinExistence type="inferred from homology"/>
<feature type="chain" id="PRO_0000267149" description="UPF0398 protein BCE_1688">
    <location>
        <begin position="1"/>
        <end position="184"/>
    </location>
</feature>